<organism>
    <name type="scientific">Vibrio vulnificus (strain CMCP6)</name>
    <dbReference type="NCBI Taxonomy" id="216895"/>
    <lineage>
        <taxon>Bacteria</taxon>
        <taxon>Pseudomonadati</taxon>
        <taxon>Pseudomonadota</taxon>
        <taxon>Gammaproteobacteria</taxon>
        <taxon>Vibrionales</taxon>
        <taxon>Vibrionaceae</taxon>
        <taxon>Vibrio</taxon>
    </lineage>
</organism>
<accession>Q8DD33</accession>
<keyword id="KW-0131">Cell cycle</keyword>
<keyword id="KW-0132">Cell division</keyword>
<keyword id="KW-0133">Cell shape</keyword>
<keyword id="KW-0961">Cell wall biogenesis/degradation</keyword>
<keyword id="KW-0963">Cytoplasm</keyword>
<keyword id="KW-0274">FAD</keyword>
<keyword id="KW-0285">Flavoprotein</keyword>
<keyword id="KW-0521">NADP</keyword>
<keyword id="KW-0560">Oxidoreductase</keyword>
<keyword id="KW-0573">Peptidoglycan synthesis</keyword>
<feature type="chain" id="PRO_0000179288" description="UDP-N-acetylenolpyruvoylglucosamine reductase">
    <location>
        <begin position="1"/>
        <end position="347"/>
    </location>
</feature>
<feature type="domain" description="FAD-binding PCMH-type" evidence="1">
    <location>
        <begin position="16"/>
        <end position="187"/>
    </location>
</feature>
<feature type="active site" evidence="1">
    <location>
        <position position="163"/>
    </location>
</feature>
<feature type="active site" description="Proton donor" evidence="1">
    <location>
        <position position="233"/>
    </location>
</feature>
<feature type="active site" evidence="1">
    <location>
        <position position="328"/>
    </location>
</feature>
<sequence length="347" mass="38642">MQIKQNISLKPYHTFAIEQCSHYLVEVGSVDELVDIYANPDFRELPKLILGSGSNVLFTQPFSGVVVVNRLSGKTLSEDESFYYIHAEGGEDWPNLVEWCVQQGIGGLENLALIPGCAGSAPIQNIGAYGVEFKDVCQYVDILMLDDFSQRRLSAEECQFGYRDSVFKHALYNQCVVIAVGLKLPKTWQANNSYGPLQEIAEHELSPMSIFHKVCEVRREKLPDPKQIGNAGSFFKNPIIDKAHWQQLKAQFPNIVAYPAGEQMKVAAGWLIDQCDFKGVQVGGAQVHPKQALVLTNAQSCTAQDIIQLASLICDAVWDKYQIALEHEVRFISTVGETCLSELRVES</sequence>
<reference key="1">
    <citation type="submission" date="2002-12" db="EMBL/GenBank/DDBJ databases">
        <title>Complete genome sequence of Vibrio vulnificus CMCP6.</title>
        <authorList>
            <person name="Rhee J.H."/>
            <person name="Kim S.Y."/>
            <person name="Chung S.S."/>
            <person name="Kim J.J."/>
            <person name="Moon Y.H."/>
            <person name="Jeong H."/>
            <person name="Choy H.E."/>
        </authorList>
    </citation>
    <scope>NUCLEOTIDE SEQUENCE [LARGE SCALE GENOMIC DNA]</scope>
    <source>
        <strain>CMCP6</strain>
    </source>
</reference>
<proteinExistence type="inferred from homology"/>
<gene>
    <name evidence="1" type="primary">murB</name>
    <name type="ordered locus">VV1_1197</name>
</gene>
<protein>
    <recommendedName>
        <fullName evidence="1">UDP-N-acetylenolpyruvoylglucosamine reductase</fullName>
        <ecNumber evidence="1">1.3.1.98</ecNumber>
    </recommendedName>
    <alternativeName>
        <fullName evidence="1">UDP-N-acetylmuramate dehydrogenase</fullName>
    </alternativeName>
</protein>
<evidence type="ECO:0000255" key="1">
    <source>
        <dbReference type="HAMAP-Rule" id="MF_00037"/>
    </source>
</evidence>
<name>MURB_VIBVU</name>
<comment type="function">
    <text evidence="1">Cell wall formation.</text>
</comment>
<comment type="catalytic activity">
    <reaction evidence="1">
        <text>UDP-N-acetyl-alpha-D-muramate + NADP(+) = UDP-N-acetyl-3-O-(1-carboxyvinyl)-alpha-D-glucosamine + NADPH + H(+)</text>
        <dbReference type="Rhea" id="RHEA:12248"/>
        <dbReference type="ChEBI" id="CHEBI:15378"/>
        <dbReference type="ChEBI" id="CHEBI:57783"/>
        <dbReference type="ChEBI" id="CHEBI:58349"/>
        <dbReference type="ChEBI" id="CHEBI:68483"/>
        <dbReference type="ChEBI" id="CHEBI:70757"/>
        <dbReference type="EC" id="1.3.1.98"/>
    </reaction>
</comment>
<comment type="cofactor">
    <cofactor evidence="1">
        <name>FAD</name>
        <dbReference type="ChEBI" id="CHEBI:57692"/>
    </cofactor>
</comment>
<comment type="pathway">
    <text evidence="1">Cell wall biogenesis; peptidoglycan biosynthesis.</text>
</comment>
<comment type="subcellular location">
    <subcellularLocation>
        <location evidence="1">Cytoplasm</location>
    </subcellularLocation>
</comment>
<comment type="similarity">
    <text evidence="1">Belongs to the MurB family.</text>
</comment>
<dbReference type="EC" id="1.3.1.98" evidence="1"/>
<dbReference type="EMBL" id="AE016795">
    <property type="protein sequence ID" value="AAO09658.1"/>
    <property type="molecule type" value="Genomic_DNA"/>
</dbReference>
<dbReference type="RefSeq" id="WP_011079191.1">
    <property type="nucleotide sequence ID" value="NC_004459.3"/>
</dbReference>
<dbReference type="SMR" id="Q8DD33"/>
<dbReference type="KEGG" id="vvu:VV1_1197"/>
<dbReference type="HOGENOM" id="CLU_035304_0_0_6"/>
<dbReference type="UniPathway" id="UPA00219"/>
<dbReference type="Proteomes" id="UP000002275">
    <property type="component" value="Chromosome 1"/>
</dbReference>
<dbReference type="GO" id="GO:0005829">
    <property type="term" value="C:cytosol"/>
    <property type="evidence" value="ECO:0007669"/>
    <property type="project" value="TreeGrafter"/>
</dbReference>
<dbReference type="GO" id="GO:0071949">
    <property type="term" value="F:FAD binding"/>
    <property type="evidence" value="ECO:0007669"/>
    <property type="project" value="InterPro"/>
</dbReference>
<dbReference type="GO" id="GO:0008762">
    <property type="term" value="F:UDP-N-acetylmuramate dehydrogenase activity"/>
    <property type="evidence" value="ECO:0007669"/>
    <property type="project" value="UniProtKB-UniRule"/>
</dbReference>
<dbReference type="GO" id="GO:0051301">
    <property type="term" value="P:cell division"/>
    <property type="evidence" value="ECO:0007669"/>
    <property type="project" value="UniProtKB-KW"/>
</dbReference>
<dbReference type="GO" id="GO:0071555">
    <property type="term" value="P:cell wall organization"/>
    <property type="evidence" value="ECO:0007669"/>
    <property type="project" value="UniProtKB-KW"/>
</dbReference>
<dbReference type="GO" id="GO:0009252">
    <property type="term" value="P:peptidoglycan biosynthetic process"/>
    <property type="evidence" value="ECO:0007669"/>
    <property type="project" value="UniProtKB-UniRule"/>
</dbReference>
<dbReference type="GO" id="GO:0008360">
    <property type="term" value="P:regulation of cell shape"/>
    <property type="evidence" value="ECO:0007669"/>
    <property type="project" value="UniProtKB-KW"/>
</dbReference>
<dbReference type="Gene3D" id="3.30.465.10">
    <property type="match status" value="1"/>
</dbReference>
<dbReference type="Gene3D" id="3.90.78.10">
    <property type="entry name" value="UDP-N-acetylenolpyruvoylglucosamine reductase, C-terminal domain"/>
    <property type="match status" value="1"/>
</dbReference>
<dbReference type="Gene3D" id="3.30.43.10">
    <property type="entry name" value="Uridine Diphospho-n-acetylenolpyruvylglucosamine Reductase, domain 2"/>
    <property type="match status" value="1"/>
</dbReference>
<dbReference type="HAMAP" id="MF_00037">
    <property type="entry name" value="MurB"/>
    <property type="match status" value="1"/>
</dbReference>
<dbReference type="InterPro" id="IPR016166">
    <property type="entry name" value="FAD-bd_PCMH"/>
</dbReference>
<dbReference type="InterPro" id="IPR036318">
    <property type="entry name" value="FAD-bd_PCMH-like_sf"/>
</dbReference>
<dbReference type="InterPro" id="IPR016167">
    <property type="entry name" value="FAD-bd_PCMH_sub1"/>
</dbReference>
<dbReference type="InterPro" id="IPR016169">
    <property type="entry name" value="FAD-bd_PCMH_sub2"/>
</dbReference>
<dbReference type="InterPro" id="IPR003170">
    <property type="entry name" value="MurB"/>
</dbReference>
<dbReference type="InterPro" id="IPR011601">
    <property type="entry name" value="MurB_C"/>
</dbReference>
<dbReference type="InterPro" id="IPR036635">
    <property type="entry name" value="MurB_C_sf"/>
</dbReference>
<dbReference type="InterPro" id="IPR006094">
    <property type="entry name" value="Oxid_FAD_bind_N"/>
</dbReference>
<dbReference type="NCBIfam" id="TIGR00179">
    <property type="entry name" value="murB"/>
    <property type="match status" value="1"/>
</dbReference>
<dbReference type="NCBIfam" id="NF000755">
    <property type="entry name" value="PRK00046.1"/>
    <property type="match status" value="1"/>
</dbReference>
<dbReference type="PANTHER" id="PTHR21071">
    <property type="entry name" value="UDP-N-ACETYLENOLPYRUVOYLGLUCOSAMINE REDUCTASE"/>
    <property type="match status" value="1"/>
</dbReference>
<dbReference type="PANTHER" id="PTHR21071:SF4">
    <property type="entry name" value="UDP-N-ACETYLENOLPYRUVOYLGLUCOSAMINE REDUCTASE"/>
    <property type="match status" value="1"/>
</dbReference>
<dbReference type="Pfam" id="PF01565">
    <property type="entry name" value="FAD_binding_4"/>
    <property type="match status" value="1"/>
</dbReference>
<dbReference type="Pfam" id="PF02873">
    <property type="entry name" value="MurB_C"/>
    <property type="match status" value="1"/>
</dbReference>
<dbReference type="SUPFAM" id="SSF56176">
    <property type="entry name" value="FAD-binding/transporter-associated domain-like"/>
    <property type="match status" value="1"/>
</dbReference>
<dbReference type="SUPFAM" id="SSF56194">
    <property type="entry name" value="Uridine diphospho-N-Acetylenolpyruvylglucosamine reductase, MurB, C-terminal domain"/>
    <property type="match status" value="1"/>
</dbReference>
<dbReference type="PROSITE" id="PS51387">
    <property type="entry name" value="FAD_PCMH"/>
    <property type="match status" value="1"/>
</dbReference>